<proteinExistence type="evidence at transcript level"/>
<name>PP128_ARATH</name>
<evidence type="ECO:0000269" key="1">
    <source>
    </source>
</evidence>
<evidence type="ECO:0000305" key="2"/>
<evidence type="ECO:0000305" key="3">
    <source>
    </source>
</evidence>
<protein>
    <recommendedName>
        <fullName>Pentatricopeptide repeat-containing protein At1g77170, mitochondrial</fullName>
    </recommendedName>
</protein>
<keyword id="KW-0496">Mitochondrion</keyword>
<keyword id="KW-1185">Reference proteome</keyword>
<keyword id="KW-0677">Repeat</keyword>
<keyword id="KW-0809">Transit peptide</keyword>
<gene>
    <name type="primary">PCMP-E21</name>
    <name type="ordered locus">At1g77170</name>
    <name type="ORF">T14N5.20</name>
</gene>
<accession>Q3ECB8</accession>
<feature type="transit peptide" description="Mitochondrion" evidence="1">
    <location>
        <begin position="1"/>
        <end position="30"/>
    </location>
</feature>
<feature type="chain" id="PRO_0000342869" description="Pentatricopeptide repeat-containing protein At1g77170, mitochondrial">
    <location>
        <begin position="31"/>
        <end position="467"/>
    </location>
</feature>
<feature type="repeat" description="PPR 1">
    <location>
        <begin position="81"/>
        <end position="115"/>
    </location>
</feature>
<feature type="repeat" description="PPR 2">
    <location>
        <begin position="116"/>
        <end position="150"/>
    </location>
</feature>
<feature type="repeat" description="PPR 3">
    <location>
        <begin position="151"/>
        <end position="181"/>
    </location>
</feature>
<feature type="repeat" description="PPR 4">
    <location>
        <begin position="182"/>
        <end position="216"/>
    </location>
</feature>
<feature type="repeat" description="PPR 5">
    <location>
        <begin position="217"/>
        <end position="251"/>
    </location>
</feature>
<feature type="repeat" description="PPR 6">
    <location>
        <begin position="254"/>
        <end position="284"/>
    </location>
</feature>
<feature type="repeat" description="PPR 7">
    <location>
        <begin position="285"/>
        <end position="319"/>
    </location>
</feature>
<feature type="repeat" description="PPR 8">
    <location>
        <begin position="320"/>
        <end position="350"/>
    </location>
</feature>
<feature type="repeat" description="PPR 9">
    <location>
        <begin position="356"/>
        <end position="386"/>
    </location>
</feature>
<feature type="region of interest" description="Type E motif">
    <location>
        <begin position="391"/>
        <end position="466"/>
    </location>
</feature>
<organism>
    <name type="scientific">Arabidopsis thaliana</name>
    <name type="common">Mouse-ear cress</name>
    <dbReference type="NCBI Taxonomy" id="3702"/>
    <lineage>
        <taxon>Eukaryota</taxon>
        <taxon>Viridiplantae</taxon>
        <taxon>Streptophyta</taxon>
        <taxon>Embryophyta</taxon>
        <taxon>Tracheophyta</taxon>
        <taxon>Spermatophyta</taxon>
        <taxon>Magnoliopsida</taxon>
        <taxon>eudicotyledons</taxon>
        <taxon>Gunneridae</taxon>
        <taxon>Pentapetalae</taxon>
        <taxon>rosids</taxon>
        <taxon>malvids</taxon>
        <taxon>Brassicales</taxon>
        <taxon>Brassicaceae</taxon>
        <taxon>Camelineae</taxon>
        <taxon>Arabidopsis</taxon>
    </lineage>
</organism>
<sequence length="467" mass="52657">MFFSGLISKLHVHGTKRTNHFTIFHRLNHFVTTSSSSVTPLSPQDRNKLLATLLSNCTSLARVRRIHGDIFRSRILDQYPIAFLWNNIMRSYIRHESPLDAIQVYLGMVRSTVLPDRYSLPIVIKAAVQIHDFTLGKELHSVAVRLGFVGDEFCESGFITLYCKAGEFENARKVFDENPERKLGSWNAIIGGLNHAGRANEAVEMFVDMKRSGLEPDDFTMVSVTASCGGLGDLSLAFQLHKCVLQAKTEEKSDIMMLNSLIDMYGKCGRMDLASHIFEEMRQRNVVSWSSMIVGYAANGNTLEALECFRQMREFGVRPNKITFVGVLSACVHGGLVEEGKTYFAMMKSEFELEPGLSHYGCIVDLLSRDGQLKEAKKVVEEMPMKPNVMVWGCLMGGCEKFGDVEMAEWVAPYMVELEPWNDGVYVVLANVYALRGMWKDVERVRKLMKTKKVAKIPAYSYASTTF</sequence>
<reference key="1">
    <citation type="journal article" date="2000" name="Nature">
        <title>Sequence and analysis of chromosome 1 of the plant Arabidopsis thaliana.</title>
        <authorList>
            <person name="Theologis A."/>
            <person name="Ecker J.R."/>
            <person name="Palm C.J."/>
            <person name="Federspiel N.A."/>
            <person name="Kaul S."/>
            <person name="White O."/>
            <person name="Alonso J."/>
            <person name="Altafi H."/>
            <person name="Araujo R."/>
            <person name="Bowman C.L."/>
            <person name="Brooks S.Y."/>
            <person name="Buehler E."/>
            <person name="Chan A."/>
            <person name="Chao Q."/>
            <person name="Chen H."/>
            <person name="Cheuk R.F."/>
            <person name="Chin C.W."/>
            <person name="Chung M.K."/>
            <person name="Conn L."/>
            <person name="Conway A.B."/>
            <person name="Conway A.R."/>
            <person name="Creasy T.H."/>
            <person name="Dewar K."/>
            <person name="Dunn P."/>
            <person name="Etgu P."/>
            <person name="Feldblyum T.V."/>
            <person name="Feng J.-D."/>
            <person name="Fong B."/>
            <person name="Fujii C.Y."/>
            <person name="Gill J.E."/>
            <person name="Goldsmith A.D."/>
            <person name="Haas B."/>
            <person name="Hansen N.F."/>
            <person name="Hughes B."/>
            <person name="Huizar L."/>
            <person name="Hunter J.L."/>
            <person name="Jenkins J."/>
            <person name="Johnson-Hopson C."/>
            <person name="Khan S."/>
            <person name="Khaykin E."/>
            <person name="Kim C.J."/>
            <person name="Koo H.L."/>
            <person name="Kremenetskaia I."/>
            <person name="Kurtz D.B."/>
            <person name="Kwan A."/>
            <person name="Lam B."/>
            <person name="Langin-Hooper S."/>
            <person name="Lee A."/>
            <person name="Lee J.M."/>
            <person name="Lenz C.A."/>
            <person name="Li J.H."/>
            <person name="Li Y.-P."/>
            <person name="Lin X."/>
            <person name="Liu S.X."/>
            <person name="Liu Z.A."/>
            <person name="Luros J.S."/>
            <person name="Maiti R."/>
            <person name="Marziali A."/>
            <person name="Militscher J."/>
            <person name="Miranda M."/>
            <person name="Nguyen M."/>
            <person name="Nierman W.C."/>
            <person name="Osborne B.I."/>
            <person name="Pai G."/>
            <person name="Peterson J."/>
            <person name="Pham P.K."/>
            <person name="Rizzo M."/>
            <person name="Rooney T."/>
            <person name="Rowley D."/>
            <person name="Sakano H."/>
            <person name="Salzberg S.L."/>
            <person name="Schwartz J.R."/>
            <person name="Shinn P."/>
            <person name="Southwick A.M."/>
            <person name="Sun H."/>
            <person name="Tallon L.J."/>
            <person name="Tambunga G."/>
            <person name="Toriumi M.J."/>
            <person name="Town C.D."/>
            <person name="Utterback T."/>
            <person name="Van Aken S."/>
            <person name="Vaysberg M."/>
            <person name="Vysotskaia V.S."/>
            <person name="Walker M."/>
            <person name="Wu D."/>
            <person name="Yu G."/>
            <person name="Fraser C.M."/>
            <person name="Venter J.C."/>
            <person name="Davis R.W."/>
        </authorList>
    </citation>
    <scope>NUCLEOTIDE SEQUENCE [LARGE SCALE GENOMIC DNA]</scope>
    <source>
        <strain>cv. Columbia</strain>
    </source>
</reference>
<reference key="2">
    <citation type="journal article" date="2017" name="Plant J.">
        <title>Araport11: a complete reannotation of the Arabidopsis thaliana reference genome.</title>
        <authorList>
            <person name="Cheng C.Y."/>
            <person name="Krishnakumar V."/>
            <person name="Chan A.P."/>
            <person name="Thibaud-Nissen F."/>
            <person name="Schobel S."/>
            <person name="Town C.D."/>
        </authorList>
    </citation>
    <scope>GENOME REANNOTATION</scope>
    <source>
        <strain>cv. Columbia</strain>
    </source>
</reference>
<reference key="3">
    <citation type="journal article" date="2000" name="Plant Mol. Biol.">
        <title>In Arabidopsis thaliana, 1% of the genome codes for a novel protein family unique to plants.</title>
        <authorList>
            <person name="Aubourg S."/>
            <person name="Boudet N."/>
            <person name="Kreis M."/>
            <person name="Lecharny A."/>
        </authorList>
    </citation>
    <scope>GENE FAMILY</scope>
</reference>
<reference key="4">
    <citation type="journal article" date="2004" name="Plant Cell">
        <title>Genome-wide analysis of Arabidopsis pentatricopeptide repeat proteins reveals their essential role in organelle biogenesis.</title>
        <authorList>
            <person name="Lurin C."/>
            <person name="Andres C."/>
            <person name="Aubourg S."/>
            <person name="Bellaoui M."/>
            <person name="Bitton F."/>
            <person name="Bruyere C."/>
            <person name="Caboche M."/>
            <person name="Debast C."/>
            <person name="Gualberto J."/>
            <person name="Hoffmann B."/>
            <person name="Lecharny A."/>
            <person name="Le Ret M."/>
            <person name="Martin-Magniette M.-L."/>
            <person name="Mireau H."/>
            <person name="Peeters N."/>
            <person name="Renou J.-P."/>
            <person name="Szurek B."/>
            <person name="Taconnat L."/>
            <person name="Small I."/>
        </authorList>
    </citation>
    <scope>GENE FAMILY</scope>
</reference>
<reference key="5">
    <citation type="journal article" date="2015" name="Plant Physiol.">
        <title>INTERMEDIATE CLEAVAGE PEPTIDASE55 modifies enzyme amino termini and alters protein stability in Arabidopsis mitochondria.</title>
        <authorList>
            <person name="Huang S."/>
            <person name="Nelson C.J."/>
            <person name="Li L."/>
            <person name="Taylor N.L."/>
            <person name="Stroeher E."/>
            <person name="Peteriet J."/>
            <person name="Millar A.H."/>
        </authorList>
    </citation>
    <scope>IDENTIFICATION BY MASS SPECTROMETRY</scope>
    <scope>CLEAVAGE OF TRANSIT PEPTIDE AFTER PHE-30</scope>
</reference>
<dbReference type="EMBL" id="AC004260">
    <property type="status" value="NOT_ANNOTATED_CDS"/>
    <property type="molecule type" value="Genomic_DNA"/>
</dbReference>
<dbReference type="EMBL" id="CP002684">
    <property type="protein sequence ID" value="AEE35944.1"/>
    <property type="molecule type" value="Genomic_DNA"/>
</dbReference>
<dbReference type="RefSeq" id="NP_177842.1">
    <property type="nucleotide sequence ID" value="NM_106367.4"/>
</dbReference>
<dbReference type="SMR" id="Q3ECB8"/>
<dbReference type="FunCoup" id="Q3ECB8">
    <property type="interactions" value="109"/>
</dbReference>
<dbReference type="IntAct" id="Q3ECB8">
    <property type="interactions" value="1"/>
</dbReference>
<dbReference type="PaxDb" id="3702-AT1G77170.1"/>
<dbReference type="ProteomicsDB" id="249407"/>
<dbReference type="EnsemblPlants" id="AT1G77170.1">
    <property type="protein sequence ID" value="AT1G77170.1"/>
    <property type="gene ID" value="AT1G77170"/>
</dbReference>
<dbReference type="GeneID" id="844054"/>
<dbReference type="Gramene" id="AT1G77170.1">
    <property type="protein sequence ID" value="AT1G77170.1"/>
    <property type="gene ID" value="AT1G77170"/>
</dbReference>
<dbReference type="KEGG" id="ath:AT1G77170"/>
<dbReference type="Araport" id="AT1G77170"/>
<dbReference type="TAIR" id="AT1G77170"/>
<dbReference type="eggNOG" id="KOG4197">
    <property type="taxonomic scope" value="Eukaryota"/>
</dbReference>
<dbReference type="HOGENOM" id="CLU_002706_0_6_1"/>
<dbReference type="InParanoid" id="Q3ECB8"/>
<dbReference type="OMA" id="NSVVWGC"/>
<dbReference type="PhylomeDB" id="Q3ECB8"/>
<dbReference type="PRO" id="PR:Q3ECB8"/>
<dbReference type="Proteomes" id="UP000006548">
    <property type="component" value="Chromosome 1"/>
</dbReference>
<dbReference type="ExpressionAtlas" id="Q3ECB8">
    <property type="expression patterns" value="baseline and differential"/>
</dbReference>
<dbReference type="GO" id="GO:0005739">
    <property type="term" value="C:mitochondrion"/>
    <property type="evidence" value="ECO:0007669"/>
    <property type="project" value="UniProtKB-SubCell"/>
</dbReference>
<dbReference type="GO" id="GO:0003723">
    <property type="term" value="F:RNA binding"/>
    <property type="evidence" value="ECO:0007669"/>
    <property type="project" value="InterPro"/>
</dbReference>
<dbReference type="GO" id="GO:0009451">
    <property type="term" value="P:RNA modification"/>
    <property type="evidence" value="ECO:0007669"/>
    <property type="project" value="InterPro"/>
</dbReference>
<dbReference type="FunFam" id="1.25.40.10:FF:001814">
    <property type="entry name" value="Pentatricopeptide repeat-containing protein At1g77170, mitochondrial"/>
    <property type="match status" value="1"/>
</dbReference>
<dbReference type="FunFam" id="1.25.40.10:FF:000090">
    <property type="entry name" value="Pentatricopeptide repeat-containing protein, chloroplastic"/>
    <property type="match status" value="1"/>
</dbReference>
<dbReference type="Gene3D" id="1.25.40.10">
    <property type="entry name" value="Tetratricopeptide repeat domain"/>
    <property type="match status" value="3"/>
</dbReference>
<dbReference type="InterPro" id="IPR046848">
    <property type="entry name" value="E_motif"/>
</dbReference>
<dbReference type="InterPro" id="IPR002885">
    <property type="entry name" value="Pentatricopeptide_rpt"/>
</dbReference>
<dbReference type="InterPro" id="IPR046960">
    <property type="entry name" value="PPR_At4g14850-like_plant"/>
</dbReference>
<dbReference type="InterPro" id="IPR011990">
    <property type="entry name" value="TPR-like_helical_dom_sf"/>
</dbReference>
<dbReference type="NCBIfam" id="TIGR00756">
    <property type="entry name" value="PPR"/>
    <property type="match status" value="3"/>
</dbReference>
<dbReference type="PANTHER" id="PTHR47926:SF491">
    <property type="entry name" value="(WILD MALAYSIAN BANANA) HYPOTHETICAL PROTEIN"/>
    <property type="match status" value="1"/>
</dbReference>
<dbReference type="PANTHER" id="PTHR47926">
    <property type="entry name" value="PENTATRICOPEPTIDE REPEAT-CONTAINING PROTEIN"/>
    <property type="match status" value="1"/>
</dbReference>
<dbReference type="Pfam" id="PF20431">
    <property type="entry name" value="E_motif"/>
    <property type="match status" value="1"/>
</dbReference>
<dbReference type="Pfam" id="PF01535">
    <property type="entry name" value="PPR"/>
    <property type="match status" value="3"/>
</dbReference>
<dbReference type="Pfam" id="PF13041">
    <property type="entry name" value="PPR_2"/>
    <property type="match status" value="2"/>
</dbReference>
<dbReference type="PROSITE" id="PS51375">
    <property type="entry name" value="PPR"/>
    <property type="match status" value="10"/>
</dbReference>
<comment type="subcellular location">
    <subcellularLocation>
        <location evidence="3">Mitochondrion</location>
    </subcellularLocation>
</comment>
<comment type="similarity">
    <text evidence="2">Belongs to the PPR family. PCMP-E subfamily.</text>
</comment>
<comment type="online information" name="Pentatricopeptide repeat proteins">
    <link uri="https://ppr.plantenergy.uwa.edu.au"/>
</comment>